<evidence type="ECO:0000255" key="1">
    <source>
        <dbReference type="HAMAP-Rule" id="MF_00580"/>
    </source>
</evidence>
<comment type="function">
    <text evidence="1">Together with the chaperonin GroEL, plays an essential role in assisting protein folding. The GroEL-GroES system forms a nano-cage that allows encapsulation of the non-native substrate proteins and provides a physical environment optimized to promote and accelerate protein folding. GroES binds to the apical surface of the GroEL ring, thereby capping the opening of the GroEL channel.</text>
</comment>
<comment type="subunit">
    <text evidence="1">Heptamer of 7 subunits arranged in a ring. Interacts with the chaperonin GroEL.</text>
</comment>
<comment type="subcellular location">
    <subcellularLocation>
        <location evidence="1">Cytoplasm</location>
    </subcellularLocation>
</comment>
<comment type="similarity">
    <text evidence="1">Belongs to the GroES chaperonin family.</text>
</comment>
<feature type="chain" id="PRO_1000025240" description="Co-chaperonin GroES">
    <location>
        <begin position="1"/>
        <end position="94"/>
    </location>
</feature>
<sequence length="94" mass="10293">MRIKPLGDRVVIKRLEAEEKTKSGIVLPGSAKEKPQEAEIVAVGPGGLVDGKEVRMEVKVGDKVLFSKYSGTEVKLDGEEYTILRQNDILAIVE</sequence>
<organism>
    <name type="scientific">Clostridium novyi (strain NT)</name>
    <dbReference type="NCBI Taxonomy" id="386415"/>
    <lineage>
        <taxon>Bacteria</taxon>
        <taxon>Bacillati</taxon>
        <taxon>Bacillota</taxon>
        <taxon>Clostridia</taxon>
        <taxon>Eubacteriales</taxon>
        <taxon>Clostridiaceae</taxon>
        <taxon>Clostridium</taxon>
    </lineage>
</organism>
<name>CH10_CLONN</name>
<reference key="1">
    <citation type="journal article" date="2006" name="Nat. Biotechnol.">
        <title>The genome and transcriptomes of the anti-tumor agent Clostridium novyi-NT.</title>
        <authorList>
            <person name="Bettegowda C."/>
            <person name="Huang X."/>
            <person name="Lin J."/>
            <person name="Cheong I."/>
            <person name="Kohli M."/>
            <person name="Szabo S.A."/>
            <person name="Zhang X."/>
            <person name="Diaz L.A. Jr."/>
            <person name="Velculescu V.E."/>
            <person name="Parmigiani G."/>
            <person name="Kinzler K.W."/>
            <person name="Vogelstein B."/>
            <person name="Zhou S."/>
        </authorList>
    </citation>
    <scope>NUCLEOTIDE SEQUENCE [LARGE SCALE GENOMIC DNA]</scope>
    <source>
        <strain>NT</strain>
    </source>
</reference>
<dbReference type="EMBL" id="CP000382">
    <property type="protein sequence ID" value="ABK62466.1"/>
    <property type="molecule type" value="Genomic_DNA"/>
</dbReference>
<dbReference type="RefSeq" id="WP_003364549.1">
    <property type="nucleotide sequence ID" value="NC_008593.1"/>
</dbReference>
<dbReference type="SMR" id="A0Q2T2"/>
<dbReference type="STRING" id="386415.NT01CX_0463"/>
<dbReference type="KEGG" id="cno:NT01CX_0463"/>
<dbReference type="eggNOG" id="COG0234">
    <property type="taxonomic scope" value="Bacteria"/>
</dbReference>
<dbReference type="HOGENOM" id="CLU_132825_2_0_9"/>
<dbReference type="Proteomes" id="UP000008220">
    <property type="component" value="Chromosome"/>
</dbReference>
<dbReference type="GO" id="GO:0005737">
    <property type="term" value="C:cytoplasm"/>
    <property type="evidence" value="ECO:0007669"/>
    <property type="project" value="UniProtKB-SubCell"/>
</dbReference>
<dbReference type="GO" id="GO:0005524">
    <property type="term" value="F:ATP binding"/>
    <property type="evidence" value="ECO:0007669"/>
    <property type="project" value="InterPro"/>
</dbReference>
<dbReference type="GO" id="GO:0046872">
    <property type="term" value="F:metal ion binding"/>
    <property type="evidence" value="ECO:0007669"/>
    <property type="project" value="TreeGrafter"/>
</dbReference>
<dbReference type="GO" id="GO:0044183">
    <property type="term" value="F:protein folding chaperone"/>
    <property type="evidence" value="ECO:0007669"/>
    <property type="project" value="InterPro"/>
</dbReference>
<dbReference type="GO" id="GO:0051087">
    <property type="term" value="F:protein-folding chaperone binding"/>
    <property type="evidence" value="ECO:0007669"/>
    <property type="project" value="TreeGrafter"/>
</dbReference>
<dbReference type="GO" id="GO:0051082">
    <property type="term" value="F:unfolded protein binding"/>
    <property type="evidence" value="ECO:0007669"/>
    <property type="project" value="TreeGrafter"/>
</dbReference>
<dbReference type="GO" id="GO:0051085">
    <property type="term" value="P:chaperone cofactor-dependent protein refolding"/>
    <property type="evidence" value="ECO:0007669"/>
    <property type="project" value="TreeGrafter"/>
</dbReference>
<dbReference type="CDD" id="cd00320">
    <property type="entry name" value="cpn10"/>
    <property type="match status" value="1"/>
</dbReference>
<dbReference type="FunFam" id="2.30.33.40:FF:000001">
    <property type="entry name" value="10 kDa chaperonin"/>
    <property type="match status" value="1"/>
</dbReference>
<dbReference type="Gene3D" id="2.30.33.40">
    <property type="entry name" value="GroES chaperonin"/>
    <property type="match status" value="1"/>
</dbReference>
<dbReference type="HAMAP" id="MF_00580">
    <property type="entry name" value="CH10"/>
    <property type="match status" value="1"/>
</dbReference>
<dbReference type="InterPro" id="IPR020818">
    <property type="entry name" value="Chaperonin_GroES"/>
</dbReference>
<dbReference type="InterPro" id="IPR037124">
    <property type="entry name" value="Chaperonin_GroES_sf"/>
</dbReference>
<dbReference type="InterPro" id="IPR018369">
    <property type="entry name" value="Chaprnonin_Cpn10_CS"/>
</dbReference>
<dbReference type="InterPro" id="IPR011032">
    <property type="entry name" value="GroES-like_sf"/>
</dbReference>
<dbReference type="NCBIfam" id="NF001527">
    <property type="entry name" value="PRK00364.1-2"/>
    <property type="match status" value="1"/>
</dbReference>
<dbReference type="NCBIfam" id="NF001530">
    <property type="entry name" value="PRK00364.1-6"/>
    <property type="match status" value="1"/>
</dbReference>
<dbReference type="NCBIfam" id="NF001531">
    <property type="entry name" value="PRK00364.2-2"/>
    <property type="match status" value="1"/>
</dbReference>
<dbReference type="NCBIfam" id="NF001533">
    <property type="entry name" value="PRK00364.2-4"/>
    <property type="match status" value="1"/>
</dbReference>
<dbReference type="NCBIfam" id="NF001534">
    <property type="entry name" value="PRK00364.2-5"/>
    <property type="match status" value="1"/>
</dbReference>
<dbReference type="PANTHER" id="PTHR10772">
    <property type="entry name" value="10 KDA HEAT SHOCK PROTEIN"/>
    <property type="match status" value="1"/>
</dbReference>
<dbReference type="PANTHER" id="PTHR10772:SF58">
    <property type="entry name" value="CO-CHAPERONIN GROES"/>
    <property type="match status" value="1"/>
</dbReference>
<dbReference type="Pfam" id="PF00166">
    <property type="entry name" value="Cpn10"/>
    <property type="match status" value="1"/>
</dbReference>
<dbReference type="PRINTS" id="PR00297">
    <property type="entry name" value="CHAPERONIN10"/>
</dbReference>
<dbReference type="SMART" id="SM00883">
    <property type="entry name" value="Cpn10"/>
    <property type="match status" value="1"/>
</dbReference>
<dbReference type="SUPFAM" id="SSF50129">
    <property type="entry name" value="GroES-like"/>
    <property type="match status" value="1"/>
</dbReference>
<dbReference type="PROSITE" id="PS00681">
    <property type="entry name" value="CHAPERONINS_CPN10"/>
    <property type="match status" value="1"/>
</dbReference>
<proteinExistence type="inferred from homology"/>
<accession>A0Q2T2</accession>
<protein>
    <recommendedName>
        <fullName evidence="1">Co-chaperonin GroES</fullName>
    </recommendedName>
    <alternativeName>
        <fullName evidence="1">10 kDa chaperonin</fullName>
    </alternativeName>
    <alternativeName>
        <fullName evidence="1">Chaperonin-10</fullName>
        <shortName evidence="1">Cpn10</shortName>
    </alternativeName>
</protein>
<gene>
    <name evidence="1" type="primary">groES</name>
    <name evidence="1" type="synonym">groS</name>
    <name type="ordered locus">NT01CX_0463</name>
</gene>
<keyword id="KW-0143">Chaperone</keyword>
<keyword id="KW-0963">Cytoplasm</keyword>
<keyword id="KW-1185">Reference proteome</keyword>